<sequence>MGVQKHEQEITSSVPAEKMFHGLILDIDNILPKAAPGAYKNVEIKGDGGVGTIKHITLPDGGPVTTMTLRTDGLDKKGFTIDYSVIDGDVLMGFIDKIENHLSVVPTADGGSTTKTTAIFHTKGDAVVPEENIKYAEAQNTMLFKAVEAYLIAN</sequence>
<feature type="chain" id="PRO_0000458199" description="Dau c 1 isoallergen Dau c 1.0301">
    <location>
        <begin position="1"/>
        <end position="154"/>
    </location>
</feature>
<dbReference type="EMBL" id="HM064421">
    <property type="protein sequence ID" value="ADL32660.1"/>
    <property type="molecule type" value="mRNA"/>
</dbReference>
<dbReference type="SMR" id="D9ZHN9"/>
<dbReference type="Allergome" id="287">
    <property type="allergen name" value="Dau c 1"/>
</dbReference>
<dbReference type="Allergome" id="9116">
    <property type="allergen name" value="Dau c 1.0301"/>
</dbReference>
<dbReference type="GO" id="GO:0005737">
    <property type="term" value="C:cytoplasm"/>
    <property type="evidence" value="ECO:0007669"/>
    <property type="project" value="TreeGrafter"/>
</dbReference>
<dbReference type="GO" id="GO:0005634">
    <property type="term" value="C:nucleus"/>
    <property type="evidence" value="ECO:0007669"/>
    <property type="project" value="TreeGrafter"/>
</dbReference>
<dbReference type="GO" id="GO:0010427">
    <property type="term" value="F:abscisic acid binding"/>
    <property type="evidence" value="ECO:0007669"/>
    <property type="project" value="InterPro"/>
</dbReference>
<dbReference type="GO" id="GO:0004864">
    <property type="term" value="F:protein phosphatase inhibitor activity"/>
    <property type="evidence" value="ECO:0007669"/>
    <property type="project" value="InterPro"/>
</dbReference>
<dbReference type="GO" id="GO:0038023">
    <property type="term" value="F:signaling receptor activity"/>
    <property type="evidence" value="ECO:0007669"/>
    <property type="project" value="InterPro"/>
</dbReference>
<dbReference type="GO" id="GO:0009738">
    <property type="term" value="P:abscisic acid-activated signaling pathway"/>
    <property type="evidence" value="ECO:0007669"/>
    <property type="project" value="InterPro"/>
</dbReference>
<dbReference type="GO" id="GO:0006952">
    <property type="term" value="P:defense response"/>
    <property type="evidence" value="ECO:0007669"/>
    <property type="project" value="UniProtKB-KW"/>
</dbReference>
<dbReference type="GO" id="GO:0031347">
    <property type="term" value="P:regulation of defense response"/>
    <property type="evidence" value="ECO:0000270"/>
    <property type="project" value="UniProtKB"/>
</dbReference>
<dbReference type="GO" id="GO:0009620">
    <property type="term" value="P:response to fungus"/>
    <property type="evidence" value="ECO:0000270"/>
    <property type="project" value="UniProtKB"/>
</dbReference>
<dbReference type="GO" id="GO:0009611">
    <property type="term" value="P:response to wounding"/>
    <property type="evidence" value="ECO:0000270"/>
    <property type="project" value="UniProtKB"/>
</dbReference>
<dbReference type="CDD" id="cd07816">
    <property type="entry name" value="Bet_v1-like"/>
    <property type="match status" value="1"/>
</dbReference>
<dbReference type="FunFam" id="3.30.530.20:FF:000007">
    <property type="entry name" value="Major pollen allergen Bet v 1-A"/>
    <property type="match status" value="1"/>
</dbReference>
<dbReference type="Gene3D" id="3.30.530.20">
    <property type="match status" value="1"/>
</dbReference>
<dbReference type="InterPro" id="IPR000916">
    <property type="entry name" value="Bet_v_I/MLP"/>
</dbReference>
<dbReference type="InterPro" id="IPR024949">
    <property type="entry name" value="Bet_v_I_allergen"/>
</dbReference>
<dbReference type="InterPro" id="IPR050279">
    <property type="entry name" value="Plant_def-hormone_signal"/>
</dbReference>
<dbReference type="InterPro" id="IPR023393">
    <property type="entry name" value="START-like_dom_sf"/>
</dbReference>
<dbReference type="PANTHER" id="PTHR31213">
    <property type="entry name" value="OS08G0374000 PROTEIN-RELATED"/>
    <property type="match status" value="1"/>
</dbReference>
<dbReference type="PANTHER" id="PTHR31213:SF55">
    <property type="entry name" value="STRESS-INDUCED PROTEIN SAM22"/>
    <property type="match status" value="1"/>
</dbReference>
<dbReference type="Pfam" id="PF00407">
    <property type="entry name" value="Bet_v_1"/>
    <property type="match status" value="1"/>
</dbReference>
<dbReference type="PRINTS" id="PR00634">
    <property type="entry name" value="BETALLERGEN"/>
</dbReference>
<dbReference type="SUPFAM" id="SSF55961">
    <property type="entry name" value="Bet v1-like"/>
    <property type="match status" value="1"/>
</dbReference>
<proteinExistence type="evidence at protein level"/>
<protein>
    <recommendedName>
        <fullName evidence="5 6">Dau c 1 isoallergen Dau c 1.0301</fullName>
    </recommendedName>
    <alternativeName>
        <fullName evidence="4">Dau c PRPlike protein</fullName>
    </alternativeName>
    <alternativeName>
        <fullName evidence="4">Pathogenesis-related class 10 protein like</fullName>
        <shortName evidence="4">PR-10 protein like</shortName>
    </alternativeName>
    <allergenName evidence="4 5">Dau c 1.0301</allergenName>
</protein>
<name>DC103_DAUCA</name>
<keyword id="KW-0020">Allergen</keyword>
<keyword id="KW-0568">Pathogenesis-related protein</keyword>
<keyword id="KW-0611">Plant defense</keyword>
<keyword id="KW-0346">Stress response</keyword>
<reference evidence="8" key="1">
    <citation type="journal article" date="2012" name="Clin. Exp. Allergy">
        <title>Identification of a Dau c PRPlike protein (Dau c 1.03) as a new allergenic isoform in carrots (cultivar Rodelika).</title>
        <authorList>
            <person name="Wangorsch A."/>
            <person name="Weigand D."/>
            <person name="Peters S."/>
            <person name="Mahler V."/>
            <person name="Foetisch K."/>
            <person name="Reuter A."/>
            <person name="Imani J."/>
            <person name="Dewitt A.M."/>
            <person name="Kogel K.H."/>
            <person name="Lidholm J."/>
            <person name="Vieths S."/>
            <person name="Scheurer S."/>
        </authorList>
    </citation>
    <scope>NUCLEOTIDE SEQUENCE [MRNA]</scope>
    <scope>TISSUE SPECIFICITY</scope>
    <scope>INDUCTION</scope>
    <scope>ALLERGEN</scope>
    <scope>CIRCULAR DICHROISM ANALYSIS</scope>
    <source>
        <strain evidence="4">cv. Rodelika</strain>
        <tissue evidence="8">Root</tissue>
    </source>
</reference>
<reference key="2">
    <citation type="journal article" date="2020" name="Mol. Nutr. Food Res.">
        <title>Food Processing Does Not Abolish the Allergenicity of the Carrot Allergen Dau c 1: Influence of pH, Temperature, and the Food Matrix.</title>
        <authorList>
            <person name="Jacob T."/>
            <person name="Vogel L."/>
            <person name="Reuter A."/>
            <person name="Wangorsch A."/>
            <person name="Kring C."/>
            <person name="Mahler V."/>
            <person name="Woehrl B.M."/>
        </authorList>
    </citation>
    <scope>BIOPHYSICOCHEMICAL PROPERTIES</scope>
    <scope>ALLERGEN</scope>
</reference>
<reference key="3">
    <citation type="journal article" date="2021" name="Mol. Nutr. Food Res.">
        <title>A Novel Isoallergen Dau c 1.0401 in Carrot: Stability, Allergenicity, and Comparison with Other Isoallergens.</title>
        <authorList>
            <person name="Jacob T."/>
            <person name="Wangorsch A."/>
            <person name="Vogel L."/>
            <person name="Reuter A."/>
            <person name="Mahler V."/>
            <person name="Woehrl B.M."/>
        </authorList>
    </citation>
    <scope>ALLERGEN</scope>
</reference>
<comment type="biophysicochemical properties">
    <phDependence>
        <text evidence="2">Stable at pH 3 and 25 degrees Celsius.</text>
    </phDependence>
    <temperatureDependence>
        <text evidence="2">Melting temperature is 57.7 and 80.3 degrees Celsius at pH 7 and pH 3, respectively. Not heat stable, unfolds at 95 degrees Celsius at pH 3. Refolds partially at physiological pH 7, but not at pH 3, after being heated to 95 degrees Celsius and cooled down back to 25 degrees Celsius.</text>
    </temperatureDependence>
</comment>
<comment type="tissue specificity">
    <text evidence="1">Expressed in roots.</text>
</comment>
<comment type="induction">
    <text evidence="1">Up-regulated by abiotic stress (wounding) in transgenic Dau c 1.01 or Dau c 1.02 gene-silenced carrot roots, and to a lesser extent in wild-type roots. Up-regulated slightly in transgenic Dau c 1.01 or Dau c 1.02 gene-silenced carrot roots in response to biotic stress (infection with A.radicina).</text>
</comment>
<comment type="allergen">
    <text evidence="1 2 3">Causes an allergic reaction in human (PubMed:22093066, PubMed:32710524, PubMed:33547733). Recombinant protein binds to IgE in 57% and 68% of the 23 and 40 carrot-allergic patients tested in non-reducing immunoblot and immunoCAP assay, respectively (PubMed:22093066). Recombinant protein binds to IgE in 79% of the 19 carrot-allergic patients tested by the immunoCAP method (PubMed:33547733). Induces beta-hexosaminidase release from humanized rat basophilic leukemia cells at both pH 7 and pH 3 at room temperature as well as after heating to 95 degrees Celsius for 30 minutes (PubMed:32710524, PubMed:33547733). Induces histamine release from IgE-stripped and passively human serum-sensitized basophils (PubMed:22093066).</text>
</comment>
<comment type="similarity">
    <text evidence="7">Belongs to the BetVI family.</text>
</comment>
<organism evidence="8">
    <name type="scientific">Daucus carota</name>
    <name type="common">Wild carrot</name>
    <dbReference type="NCBI Taxonomy" id="4039"/>
    <lineage>
        <taxon>Eukaryota</taxon>
        <taxon>Viridiplantae</taxon>
        <taxon>Streptophyta</taxon>
        <taxon>Embryophyta</taxon>
        <taxon>Tracheophyta</taxon>
        <taxon>Spermatophyta</taxon>
        <taxon>Magnoliopsida</taxon>
        <taxon>eudicotyledons</taxon>
        <taxon>Gunneridae</taxon>
        <taxon>Pentapetalae</taxon>
        <taxon>asterids</taxon>
        <taxon>campanulids</taxon>
        <taxon>Apiales</taxon>
        <taxon>Apiaceae</taxon>
        <taxon>Apioideae</taxon>
        <taxon>Scandiceae</taxon>
        <taxon>Daucinae</taxon>
        <taxon>Daucus</taxon>
        <taxon>Daucus sect. Daucus</taxon>
    </lineage>
</organism>
<evidence type="ECO:0000269" key="1">
    <source>
    </source>
</evidence>
<evidence type="ECO:0000269" key="2">
    <source>
    </source>
</evidence>
<evidence type="ECO:0000269" key="3">
    <source>
    </source>
</evidence>
<evidence type="ECO:0000303" key="4">
    <source>
    </source>
</evidence>
<evidence type="ECO:0000303" key="5">
    <source>
    </source>
</evidence>
<evidence type="ECO:0000303" key="6">
    <source>
    </source>
</evidence>
<evidence type="ECO:0000305" key="7"/>
<evidence type="ECO:0000312" key="8">
    <source>
        <dbReference type="EMBL" id="ADL32660.1"/>
    </source>
</evidence>
<accession>D9ZHN9</accession>